<organism>
    <name type="scientific">Bacteroides fragilis (strain ATCC 25285 / DSM 2151 / CCUG 4856 / JCM 11019 / LMG 10263 / NCTC 9343 / Onslow / VPI 2553 / EN-2)</name>
    <dbReference type="NCBI Taxonomy" id="272559"/>
    <lineage>
        <taxon>Bacteria</taxon>
        <taxon>Pseudomonadati</taxon>
        <taxon>Bacteroidota</taxon>
        <taxon>Bacteroidia</taxon>
        <taxon>Bacteroidales</taxon>
        <taxon>Bacteroidaceae</taxon>
        <taxon>Bacteroides</taxon>
    </lineage>
</organism>
<sequence>MKKIVLLRHGESAWNKENRFTGWTDVDLTEKGIAEACKAGELLKENGFNFDKAYTSYLKRAVKTLNCVLDRMDQDWIPVEKSWRLNEKHYGDLQGLNKSETAAKYGDEQVLIWRRSYDIAPNALSEDDPRNPRFENRYQEVPDAELPRTESLKDTIERIMPYWKCIIFPNLKTADEILVVAHGNSLRGIIKHLKHISDEEIVKLNLPTAVPYVFEFSDELNLEKDYFLGDPEEIRKLMEAVANQGKKK</sequence>
<feature type="chain" id="PRO_0000229105" description="2,3-bisphosphoglycerate-dependent phosphoglycerate mutase">
    <location>
        <begin position="1"/>
        <end position="248"/>
    </location>
</feature>
<feature type="active site" description="Tele-phosphohistidine intermediate" evidence="1">
    <location>
        <position position="9"/>
    </location>
</feature>
<feature type="active site" description="Proton donor/acceptor" evidence="1">
    <location>
        <position position="87"/>
    </location>
</feature>
<feature type="binding site" evidence="1">
    <location>
        <begin position="8"/>
        <end position="15"/>
    </location>
    <ligand>
        <name>substrate</name>
    </ligand>
</feature>
<feature type="binding site" evidence="1">
    <location>
        <begin position="21"/>
        <end position="22"/>
    </location>
    <ligand>
        <name>substrate</name>
    </ligand>
</feature>
<feature type="binding site" evidence="1">
    <location>
        <position position="60"/>
    </location>
    <ligand>
        <name>substrate</name>
    </ligand>
</feature>
<feature type="binding site" evidence="1">
    <location>
        <begin position="87"/>
        <end position="90"/>
    </location>
    <ligand>
        <name>substrate</name>
    </ligand>
</feature>
<feature type="binding site" evidence="1">
    <location>
        <position position="98"/>
    </location>
    <ligand>
        <name>substrate</name>
    </ligand>
</feature>
<feature type="binding site" evidence="1">
    <location>
        <begin position="114"/>
        <end position="115"/>
    </location>
    <ligand>
        <name>substrate</name>
    </ligand>
</feature>
<feature type="binding site" evidence="1">
    <location>
        <begin position="183"/>
        <end position="184"/>
    </location>
    <ligand>
        <name>substrate</name>
    </ligand>
</feature>
<feature type="site" description="Transition state stabilizer" evidence="1">
    <location>
        <position position="182"/>
    </location>
</feature>
<accession>Q5LAT7</accession>
<evidence type="ECO:0000255" key="1">
    <source>
        <dbReference type="HAMAP-Rule" id="MF_01039"/>
    </source>
</evidence>
<dbReference type="EC" id="5.4.2.11" evidence="1"/>
<dbReference type="EMBL" id="CR626927">
    <property type="protein sequence ID" value="CAH08786.1"/>
    <property type="molecule type" value="Genomic_DNA"/>
</dbReference>
<dbReference type="RefSeq" id="WP_005789269.1">
    <property type="nucleotide sequence ID" value="NZ_UFTH01000001.1"/>
</dbReference>
<dbReference type="SMR" id="Q5LAT7"/>
<dbReference type="PaxDb" id="272559-BF9343_3005"/>
<dbReference type="GeneID" id="60367104"/>
<dbReference type="KEGG" id="bfs:BF9343_3005"/>
<dbReference type="eggNOG" id="COG0588">
    <property type="taxonomic scope" value="Bacteria"/>
</dbReference>
<dbReference type="HOGENOM" id="CLU_033323_1_1_10"/>
<dbReference type="UniPathway" id="UPA00109">
    <property type="reaction ID" value="UER00186"/>
</dbReference>
<dbReference type="Proteomes" id="UP000006731">
    <property type="component" value="Chromosome"/>
</dbReference>
<dbReference type="GO" id="GO:0004619">
    <property type="term" value="F:phosphoglycerate mutase activity"/>
    <property type="evidence" value="ECO:0007669"/>
    <property type="project" value="UniProtKB-EC"/>
</dbReference>
<dbReference type="GO" id="GO:0006094">
    <property type="term" value="P:gluconeogenesis"/>
    <property type="evidence" value="ECO:0007669"/>
    <property type="project" value="UniProtKB-UniRule"/>
</dbReference>
<dbReference type="GO" id="GO:0006096">
    <property type="term" value="P:glycolytic process"/>
    <property type="evidence" value="ECO:0007669"/>
    <property type="project" value="UniProtKB-UniRule"/>
</dbReference>
<dbReference type="CDD" id="cd07067">
    <property type="entry name" value="HP_PGM_like"/>
    <property type="match status" value="1"/>
</dbReference>
<dbReference type="FunFam" id="3.40.50.1240:FF:000003">
    <property type="entry name" value="2,3-bisphosphoglycerate-dependent phosphoglycerate mutase"/>
    <property type="match status" value="1"/>
</dbReference>
<dbReference type="Gene3D" id="3.40.50.1240">
    <property type="entry name" value="Phosphoglycerate mutase-like"/>
    <property type="match status" value="1"/>
</dbReference>
<dbReference type="HAMAP" id="MF_01039">
    <property type="entry name" value="PGAM_GpmA"/>
    <property type="match status" value="1"/>
</dbReference>
<dbReference type="InterPro" id="IPR013078">
    <property type="entry name" value="His_Pase_superF_clade-1"/>
</dbReference>
<dbReference type="InterPro" id="IPR029033">
    <property type="entry name" value="His_PPase_superfam"/>
</dbReference>
<dbReference type="InterPro" id="IPR001345">
    <property type="entry name" value="PG/BPGM_mutase_AS"/>
</dbReference>
<dbReference type="InterPro" id="IPR005952">
    <property type="entry name" value="Phosphogly_mut1"/>
</dbReference>
<dbReference type="NCBIfam" id="TIGR01258">
    <property type="entry name" value="pgm_1"/>
    <property type="match status" value="1"/>
</dbReference>
<dbReference type="NCBIfam" id="NF010713">
    <property type="entry name" value="PRK14115.1"/>
    <property type="match status" value="1"/>
</dbReference>
<dbReference type="PANTHER" id="PTHR11931">
    <property type="entry name" value="PHOSPHOGLYCERATE MUTASE"/>
    <property type="match status" value="1"/>
</dbReference>
<dbReference type="Pfam" id="PF00300">
    <property type="entry name" value="His_Phos_1"/>
    <property type="match status" value="2"/>
</dbReference>
<dbReference type="PIRSF" id="PIRSF000709">
    <property type="entry name" value="6PFK_2-Ptase"/>
    <property type="match status" value="1"/>
</dbReference>
<dbReference type="SMART" id="SM00855">
    <property type="entry name" value="PGAM"/>
    <property type="match status" value="1"/>
</dbReference>
<dbReference type="SUPFAM" id="SSF53254">
    <property type="entry name" value="Phosphoglycerate mutase-like"/>
    <property type="match status" value="1"/>
</dbReference>
<dbReference type="PROSITE" id="PS00175">
    <property type="entry name" value="PG_MUTASE"/>
    <property type="match status" value="1"/>
</dbReference>
<comment type="function">
    <text evidence="1">Catalyzes the interconversion of 2-phosphoglycerate and 3-phosphoglycerate.</text>
</comment>
<comment type="catalytic activity">
    <reaction evidence="1">
        <text>(2R)-2-phosphoglycerate = (2R)-3-phosphoglycerate</text>
        <dbReference type="Rhea" id="RHEA:15901"/>
        <dbReference type="ChEBI" id="CHEBI:58272"/>
        <dbReference type="ChEBI" id="CHEBI:58289"/>
        <dbReference type="EC" id="5.4.2.11"/>
    </reaction>
</comment>
<comment type="pathway">
    <text evidence="1">Carbohydrate degradation; glycolysis; pyruvate from D-glyceraldehyde 3-phosphate: step 3/5.</text>
</comment>
<comment type="similarity">
    <text evidence="1">Belongs to the phosphoglycerate mutase family. BPG-dependent PGAM subfamily.</text>
</comment>
<keyword id="KW-0312">Gluconeogenesis</keyword>
<keyword id="KW-0324">Glycolysis</keyword>
<keyword id="KW-0413">Isomerase</keyword>
<protein>
    <recommendedName>
        <fullName evidence="1">2,3-bisphosphoglycerate-dependent phosphoglycerate mutase</fullName>
        <shortName evidence="1">BPG-dependent PGAM</shortName>
        <shortName evidence="1">PGAM</shortName>
        <shortName evidence="1">Phosphoglyceromutase</shortName>
        <shortName evidence="1">dPGM</shortName>
        <ecNumber evidence="1">5.4.2.11</ecNumber>
    </recommendedName>
</protein>
<reference key="1">
    <citation type="journal article" date="2005" name="Science">
        <title>Extensive DNA inversions in the B. fragilis genome control variable gene expression.</title>
        <authorList>
            <person name="Cerdeno-Tarraga A.-M."/>
            <person name="Patrick S."/>
            <person name="Crossman L.C."/>
            <person name="Blakely G."/>
            <person name="Abratt V."/>
            <person name="Lennard N."/>
            <person name="Poxton I."/>
            <person name="Duerden B."/>
            <person name="Harris B."/>
            <person name="Quail M.A."/>
            <person name="Barron A."/>
            <person name="Clark L."/>
            <person name="Corton C."/>
            <person name="Doggett J."/>
            <person name="Holden M.T.G."/>
            <person name="Larke N."/>
            <person name="Line A."/>
            <person name="Lord A."/>
            <person name="Norbertczak H."/>
            <person name="Ormond D."/>
            <person name="Price C."/>
            <person name="Rabbinowitsch E."/>
            <person name="Woodward J."/>
            <person name="Barrell B.G."/>
            <person name="Parkhill J."/>
        </authorList>
    </citation>
    <scope>NUCLEOTIDE SEQUENCE [LARGE SCALE GENOMIC DNA]</scope>
    <source>
        <strain>ATCC 25285 / DSM 2151 / CCUG 4856 / JCM 11019 / LMG 10263 / NCTC 9343 / Onslow / VPI 2553 / EN-2</strain>
    </source>
</reference>
<name>GPMA_BACFN</name>
<proteinExistence type="inferred from homology"/>
<gene>
    <name evidence="1" type="primary">gpmA</name>
    <name type="ordered locus">BF3091</name>
</gene>